<sequence>MTDTPETLSGTECNGDRPPENGQQPSSQTRQETTDADETQAYYKVEPSLEDLPAKENQEETGNTKGNILPKGPEDEKILNENPEENLFVVHQAIKDLSLQEISAEDMAFREGHPWKKIPPNSSNLEVSRQKERTAQQQLEQRGDASTTEIEWLGFQKSRPVDILHSKCDEEEEEEEEVWNEEINEEDVDECAEEEDEVRVIEFKRKHREGSPLKEESLAREDSPLGSPGSQPGTPDEQPVFGKKGDIARNSYSRYNTISYRKIRKGNTKQRIDEFESMMHL</sequence>
<proteinExistence type="evidence at protein level"/>
<keyword id="KW-0009">Actin-binding</keyword>
<keyword id="KW-0963">Cytoplasm</keyword>
<keyword id="KW-0206">Cytoskeleton</keyword>
<keyword id="KW-0597">Phosphoprotein</keyword>
<keyword id="KW-1185">Reference proteome</keyword>
<comment type="function">
    <text evidence="1 3">Plays a role in cytoskeletal rearrangements during the late wrapping and/or compaction phases of myelinogenesis as well as in maintenance and stability of myelin sheath in the adult. May play an important role in late-stage oligodendroglia maturation, myelin/Ranvier node formation during CNS development, and in the maintenance and plasticity of related structures in the mature CNS (By similarity).</text>
</comment>
<comment type="subunit">
    <text evidence="3">Binds actin.</text>
</comment>
<comment type="subcellular location">
    <subcellularLocation>
        <location evidence="3">Cytoplasm</location>
        <location evidence="3">Cytoskeleton</location>
    </subcellularLocation>
</comment>
<comment type="tissue specificity">
    <text evidence="3">Brain and spinal cord. Exclusively expressed by the oligodendrocytes. Appears at a late stage during myelination, and in the mature nerves, it is localized to the outer cytoplasmic lip of the myelin sheath and the paranodal loops.</text>
</comment>
<comment type="developmental stage">
    <text evidence="3">Weakly detectable in the first 3 postnatal days, but increases during the initial 2 weeks after birth.</text>
</comment>
<comment type="sequence caution" evidence="4">
    <conflict type="frameshift">
        <sequence resource="EMBL-CDS" id="BAC37121"/>
    </conflict>
</comment>
<comment type="sequence caution" evidence="4">
    <conflict type="erroneous initiation">
        <sequence resource="EMBL-CDS" id="BAD90431"/>
    </conflict>
</comment>
<evidence type="ECO:0000250" key="1"/>
<evidence type="ECO:0000256" key="2">
    <source>
        <dbReference type="SAM" id="MobiDB-lite"/>
    </source>
</evidence>
<evidence type="ECO:0000269" key="3">
    <source>
    </source>
</evidence>
<evidence type="ECO:0000305" key="4"/>
<evidence type="ECO:0007744" key="5">
    <source>
    </source>
</evidence>
<accession>Q5EBJ4</accession>
<accession>Q3UVY3</accession>
<accession>Q5DTZ8</accession>
<accession>Q8C5L8</accession>
<accession>Q9CTR3</accession>
<name>ERMIN_MOUSE</name>
<protein>
    <recommendedName>
        <fullName>Ermin</fullName>
    </recommendedName>
    <alternativeName>
        <fullName>Juxtanodin</fullName>
        <shortName>JN</shortName>
    </alternativeName>
</protein>
<organism>
    <name type="scientific">Mus musculus</name>
    <name type="common">Mouse</name>
    <dbReference type="NCBI Taxonomy" id="10090"/>
    <lineage>
        <taxon>Eukaryota</taxon>
        <taxon>Metazoa</taxon>
        <taxon>Chordata</taxon>
        <taxon>Craniata</taxon>
        <taxon>Vertebrata</taxon>
        <taxon>Euteleostomi</taxon>
        <taxon>Mammalia</taxon>
        <taxon>Eutheria</taxon>
        <taxon>Euarchontoglires</taxon>
        <taxon>Glires</taxon>
        <taxon>Rodentia</taxon>
        <taxon>Myomorpha</taxon>
        <taxon>Muroidea</taxon>
        <taxon>Muridae</taxon>
        <taxon>Murinae</taxon>
        <taxon>Mus</taxon>
        <taxon>Mus</taxon>
    </lineage>
</organism>
<gene>
    <name type="primary">Ermn</name>
    <name type="synonym">Kiaa1189</name>
</gene>
<feature type="chain" id="PRO_0000314749" description="Ermin">
    <location>
        <begin position="1"/>
        <end position="281"/>
    </location>
</feature>
<feature type="region of interest" description="Disordered" evidence="2">
    <location>
        <begin position="1"/>
        <end position="80"/>
    </location>
</feature>
<feature type="region of interest" description="Disordered" evidence="2">
    <location>
        <begin position="110"/>
        <end position="147"/>
    </location>
</feature>
<feature type="region of interest" description="Disordered" evidence="2">
    <location>
        <begin position="167"/>
        <end position="248"/>
    </location>
</feature>
<feature type="region of interest" description="Binds actin">
    <location>
        <begin position="262"/>
        <end position="281"/>
    </location>
</feature>
<feature type="compositionally biased region" description="Polar residues" evidence="2">
    <location>
        <begin position="1"/>
        <end position="12"/>
    </location>
</feature>
<feature type="compositionally biased region" description="Polar residues" evidence="2">
    <location>
        <begin position="21"/>
        <end position="31"/>
    </location>
</feature>
<feature type="compositionally biased region" description="Polar residues" evidence="2">
    <location>
        <begin position="135"/>
        <end position="147"/>
    </location>
</feature>
<feature type="compositionally biased region" description="Acidic residues" evidence="2">
    <location>
        <begin position="169"/>
        <end position="197"/>
    </location>
</feature>
<feature type="compositionally biased region" description="Basic and acidic residues" evidence="2">
    <location>
        <begin position="198"/>
        <end position="223"/>
    </location>
</feature>
<feature type="modified residue" description="Phosphoserine" evidence="5">
    <location>
        <position position="211"/>
    </location>
</feature>
<feature type="modified residue" description="Phosphoserine" evidence="5">
    <location>
        <position position="223"/>
    </location>
</feature>
<feature type="modified residue" description="Phosphoserine" evidence="5">
    <location>
        <position position="227"/>
    </location>
</feature>
<feature type="modified residue" description="Phosphoserine" evidence="5">
    <location>
        <position position="230"/>
    </location>
</feature>
<feature type="modified residue" description="Phosphothreonine" evidence="5">
    <location>
        <position position="234"/>
    </location>
</feature>
<feature type="sequence conflict" description="In Ref. 3; BAE23136." evidence="4" ref="3">
    <original>L</original>
    <variation>P</variation>
    <location>
        <position position="97"/>
    </location>
</feature>
<feature type="sequence conflict" description="In Ref. 2; BAD90431." evidence="4" ref="2">
    <original>D</original>
    <variation>DE</variation>
    <location>
        <position position="169"/>
    </location>
</feature>
<feature type="sequence conflict" description="In Ref. 3; BAC37121." evidence="4" ref="3">
    <original>E</original>
    <variation>G</variation>
    <location>
        <position position="171"/>
    </location>
</feature>
<reference key="1">
    <citation type="journal article" date="2006" name="J. Neurosci.">
        <title>Ermin, a myelinating oligodendrocyte-specific protein that regulates cell morphology.</title>
        <authorList>
            <person name="Brockschnieder D."/>
            <person name="Sabanay H."/>
            <person name="Riethmacher D."/>
            <person name="Peles E."/>
        </authorList>
    </citation>
    <scope>NUCLEOTIDE SEQUENCE [MRNA]</scope>
    <scope>FUNCTION</scope>
    <scope>SUBUNIT</scope>
    <scope>SUBCELLULAR LOCATION</scope>
    <scope>TISSUE SPECIFICITY</scope>
    <scope>DEVELOPMENTAL STAGE</scope>
    <source>
        <strain>C57BL/6J</strain>
        <tissue>Cerebellum</tissue>
    </source>
</reference>
<reference key="2">
    <citation type="submission" date="2005-02" db="EMBL/GenBank/DDBJ databases">
        <title>Prediction of the coding sequences of mouse homologues of KIAA gene. The complete nucleotide sequences of mouse KIAA-homologous cDNAs identified by screening of terminal sequences of cDNA clones randomly sampled from size-fractionated libraries.</title>
        <authorList>
            <person name="Okazaki N."/>
            <person name="Kikuno R.F."/>
            <person name="Ohara R."/>
            <person name="Inamoto S."/>
            <person name="Nagase T."/>
            <person name="Ohara O."/>
            <person name="Koga H."/>
        </authorList>
    </citation>
    <scope>NUCLEOTIDE SEQUENCE [LARGE SCALE MRNA]</scope>
    <source>
        <tissue>Brain</tissue>
    </source>
</reference>
<reference key="3">
    <citation type="journal article" date="2005" name="Science">
        <title>The transcriptional landscape of the mammalian genome.</title>
        <authorList>
            <person name="Carninci P."/>
            <person name="Kasukawa T."/>
            <person name="Katayama S."/>
            <person name="Gough J."/>
            <person name="Frith M.C."/>
            <person name="Maeda N."/>
            <person name="Oyama R."/>
            <person name="Ravasi T."/>
            <person name="Lenhard B."/>
            <person name="Wells C."/>
            <person name="Kodzius R."/>
            <person name="Shimokawa K."/>
            <person name="Bajic V.B."/>
            <person name="Brenner S.E."/>
            <person name="Batalov S."/>
            <person name="Forrest A.R."/>
            <person name="Zavolan M."/>
            <person name="Davis M.J."/>
            <person name="Wilming L.G."/>
            <person name="Aidinis V."/>
            <person name="Allen J.E."/>
            <person name="Ambesi-Impiombato A."/>
            <person name="Apweiler R."/>
            <person name="Aturaliya R.N."/>
            <person name="Bailey T.L."/>
            <person name="Bansal M."/>
            <person name="Baxter L."/>
            <person name="Beisel K.W."/>
            <person name="Bersano T."/>
            <person name="Bono H."/>
            <person name="Chalk A.M."/>
            <person name="Chiu K.P."/>
            <person name="Choudhary V."/>
            <person name="Christoffels A."/>
            <person name="Clutterbuck D.R."/>
            <person name="Crowe M.L."/>
            <person name="Dalla E."/>
            <person name="Dalrymple B.P."/>
            <person name="de Bono B."/>
            <person name="Della Gatta G."/>
            <person name="di Bernardo D."/>
            <person name="Down T."/>
            <person name="Engstrom P."/>
            <person name="Fagiolini M."/>
            <person name="Faulkner G."/>
            <person name="Fletcher C.F."/>
            <person name="Fukushima T."/>
            <person name="Furuno M."/>
            <person name="Futaki S."/>
            <person name="Gariboldi M."/>
            <person name="Georgii-Hemming P."/>
            <person name="Gingeras T.R."/>
            <person name="Gojobori T."/>
            <person name="Green R.E."/>
            <person name="Gustincich S."/>
            <person name="Harbers M."/>
            <person name="Hayashi Y."/>
            <person name="Hensch T.K."/>
            <person name="Hirokawa N."/>
            <person name="Hill D."/>
            <person name="Huminiecki L."/>
            <person name="Iacono M."/>
            <person name="Ikeo K."/>
            <person name="Iwama A."/>
            <person name="Ishikawa T."/>
            <person name="Jakt M."/>
            <person name="Kanapin A."/>
            <person name="Katoh M."/>
            <person name="Kawasawa Y."/>
            <person name="Kelso J."/>
            <person name="Kitamura H."/>
            <person name="Kitano H."/>
            <person name="Kollias G."/>
            <person name="Krishnan S.P."/>
            <person name="Kruger A."/>
            <person name="Kummerfeld S.K."/>
            <person name="Kurochkin I.V."/>
            <person name="Lareau L.F."/>
            <person name="Lazarevic D."/>
            <person name="Lipovich L."/>
            <person name="Liu J."/>
            <person name="Liuni S."/>
            <person name="McWilliam S."/>
            <person name="Madan Babu M."/>
            <person name="Madera M."/>
            <person name="Marchionni L."/>
            <person name="Matsuda H."/>
            <person name="Matsuzawa S."/>
            <person name="Miki H."/>
            <person name="Mignone F."/>
            <person name="Miyake S."/>
            <person name="Morris K."/>
            <person name="Mottagui-Tabar S."/>
            <person name="Mulder N."/>
            <person name="Nakano N."/>
            <person name="Nakauchi H."/>
            <person name="Ng P."/>
            <person name="Nilsson R."/>
            <person name="Nishiguchi S."/>
            <person name="Nishikawa S."/>
            <person name="Nori F."/>
            <person name="Ohara O."/>
            <person name="Okazaki Y."/>
            <person name="Orlando V."/>
            <person name="Pang K.C."/>
            <person name="Pavan W.J."/>
            <person name="Pavesi G."/>
            <person name="Pesole G."/>
            <person name="Petrovsky N."/>
            <person name="Piazza S."/>
            <person name="Reed J."/>
            <person name="Reid J.F."/>
            <person name="Ring B.Z."/>
            <person name="Ringwald M."/>
            <person name="Rost B."/>
            <person name="Ruan Y."/>
            <person name="Salzberg S.L."/>
            <person name="Sandelin A."/>
            <person name="Schneider C."/>
            <person name="Schoenbach C."/>
            <person name="Sekiguchi K."/>
            <person name="Semple C.A."/>
            <person name="Seno S."/>
            <person name="Sessa L."/>
            <person name="Sheng Y."/>
            <person name="Shibata Y."/>
            <person name="Shimada H."/>
            <person name="Shimada K."/>
            <person name="Silva D."/>
            <person name="Sinclair B."/>
            <person name="Sperling S."/>
            <person name="Stupka E."/>
            <person name="Sugiura K."/>
            <person name="Sultana R."/>
            <person name="Takenaka Y."/>
            <person name="Taki K."/>
            <person name="Tammoja K."/>
            <person name="Tan S.L."/>
            <person name="Tang S."/>
            <person name="Taylor M.S."/>
            <person name="Tegner J."/>
            <person name="Teichmann S.A."/>
            <person name="Ueda H.R."/>
            <person name="van Nimwegen E."/>
            <person name="Verardo R."/>
            <person name="Wei C.L."/>
            <person name="Yagi K."/>
            <person name="Yamanishi H."/>
            <person name="Zabarovsky E."/>
            <person name="Zhu S."/>
            <person name="Zimmer A."/>
            <person name="Hide W."/>
            <person name="Bult C."/>
            <person name="Grimmond S.M."/>
            <person name="Teasdale R.D."/>
            <person name="Liu E.T."/>
            <person name="Brusic V."/>
            <person name="Quackenbush J."/>
            <person name="Wahlestedt C."/>
            <person name="Mattick J.S."/>
            <person name="Hume D.A."/>
            <person name="Kai C."/>
            <person name="Sasaki D."/>
            <person name="Tomaru Y."/>
            <person name="Fukuda S."/>
            <person name="Kanamori-Katayama M."/>
            <person name="Suzuki M."/>
            <person name="Aoki J."/>
            <person name="Arakawa T."/>
            <person name="Iida J."/>
            <person name="Imamura K."/>
            <person name="Itoh M."/>
            <person name="Kato T."/>
            <person name="Kawaji H."/>
            <person name="Kawagashira N."/>
            <person name="Kawashima T."/>
            <person name="Kojima M."/>
            <person name="Kondo S."/>
            <person name="Konno H."/>
            <person name="Nakano K."/>
            <person name="Ninomiya N."/>
            <person name="Nishio T."/>
            <person name="Okada M."/>
            <person name="Plessy C."/>
            <person name="Shibata K."/>
            <person name="Shiraki T."/>
            <person name="Suzuki S."/>
            <person name="Tagami M."/>
            <person name="Waki K."/>
            <person name="Watahiki A."/>
            <person name="Okamura-Oho Y."/>
            <person name="Suzuki H."/>
            <person name="Kawai J."/>
            <person name="Hayashizaki Y."/>
        </authorList>
    </citation>
    <scope>NUCLEOTIDE SEQUENCE [LARGE SCALE MRNA]</scope>
    <source>
        <strain>C57BL/6J</strain>
        <tissue>Cerebellum</tissue>
        <tissue>Diencephalon</tissue>
        <tissue>Medulla oblongata</tissue>
        <tissue>Spinal cord</tissue>
    </source>
</reference>
<reference key="4">
    <citation type="journal article" date="2009" name="PLoS Biol.">
        <title>Lineage-specific biology revealed by a finished genome assembly of the mouse.</title>
        <authorList>
            <person name="Church D.M."/>
            <person name="Goodstadt L."/>
            <person name="Hillier L.W."/>
            <person name="Zody M.C."/>
            <person name="Goldstein S."/>
            <person name="She X."/>
            <person name="Bult C.J."/>
            <person name="Agarwala R."/>
            <person name="Cherry J.L."/>
            <person name="DiCuccio M."/>
            <person name="Hlavina W."/>
            <person name="Kapustin Y."/>
            <person name="Meric P."/>
            <person name="Maglott D."/>
            <person name="Birtle Z."/>
            <person name="Marques A.C."/>
            <person name="Graves T."/>
            <person name="Zhou S."/>
            <person name="Teague B."/>
            <person name="Potamousis K."/>
            <person name="Churas C."/>
            <person name="Place M."/>
            <person name="Herschleb J."/>
            <person name="Runnheim R."/>
            <person name="Forrest D."/>
            <person name="Amos-Landgraf J."/>
            <person name="Schwartz D.C."/>
            <person name="Cheng Z."/>
            <person name="Lindblad-Toh K."/>
            <person name="Eichler E.E."/>
            <person name="Ponting C.P."/>
        </authorList>
    </citation>
    <scope>NUCLEOTIDE SEQUENCE [LARGE SCALE GENOMIC DNA]</scope>
    <source>
        <strain>C57BL/6J</strain>
    </source>
</reference>
<reference key="5">
    <citation type="journal article" date="2004" name="Genome Res.">
        <title>The status, quality, and expansion of the NIH full-length cDNA project: the Mammalian Gene Collection (MGC).</title>
        <authorList>
            <consortium name="The MGC Project Team"/>
        </authorList>
    </citation>
    <scope>NUCLEOTIDE SEQUENCE [LARGE SCALE MRNA]</scope>
    <source>
        <strain>C57BL/6J</strain>
        <tissue>Brain</tissue>
        <tissue>Eye</tissue>
    </source>
</reference>
<reference key="6">
    <citation type="journal article" date="2010" name="Cell">
        <title>A tissue-specific atlas of mouse protein phosphorylation and expression.</title>
        <authorList>
            <person name="Huttlin E.L."/>
            <person name="Jedrychowski M.P."/>
            <person name="Elias J.E."/>
            <person name="Goswami T."/>
            <person name="Rad R."/>
            <person name="Beausoleil S.A."/>
            <person name="Villen J."/>
            <person name="Haas W."/>
            <person name="Sowa M.E."/>
            <person name="Gygi S.P."/>
        </authorList>
    </citation>
    <scope>PHOSPHORYLATION [LARGE SCALE ANALYSIS] AT SER-211; SER-223; SER-227; SER-230 AND THR-234</scope>
    <scope>IDENTIFICATION BY MASS SPECTROMETRY [LARGE SCALE ANALYSIS]</scope>
    <source>
        <tissue>Brain</tissue>
    </source>
</reference>
<dbReference type="EMBL" id="DQ334270">
    <property type="protein sequence ID" value="ABC67250.1"/>
    <property type="molecule type" value="mRNA"/>
</dbReference>
<dbReference type="EMBL" id="AK220372">
    <property type="protein sequence ID" value="BAD90431.1"/>
    <property type="status" value="ALT_INIT"/>
    <property type="molecule type" value="mRNA"/>
</dbReference>
<dbReference type="EMBL" id="AK020733">
    <property type="protein sequence ID" value="BAB32193.1"/>
    <property type="molecule type" value="mRNA"/>
</dbReference>
<dbReference type="EMBL" id="AK078089">
    <property type="protein sequence ID" value="BAC37121.1"/>
    <property type="status" value="ALT_FRAME"/>
    <property type="molecule type" value="mRNA"/>
</dbReference>
<dbReference type="EMBL" id="AK136820">
    <property type="protein sequence ID" value="BAE23136.1"/>
    <property type="molecule type" value="mRNA"/>
</dbReference>
<dbReference type="EMBL" id="AK137305">
    <property type="protein sequence ID" value="BAE23300.1"/>
    <property type="molecule type" value="mRNA"/>
</dbReference>
<dbReference type="EMBL" id="AL928564">
    <property type="status" value="NOT_ANNOTATED_CDS"/>
    <property type="molecule type" value="Genomic_DNA"/>
</dbReference>
<dbReference type="EMBL" id="BC089515">
    <property type="protein sequence ID" value="AAH89515.1"/>
    <property type="molecule type" value="mRNA"/>
</dbReference>
<dbReference type="EMBL" id="BC090670">
    <property type="protein sequence ID" value="AAH90670.1"/>
    <property type="molecule type" value="mRNA"/>
</dbReference>
<dbReference type="CCDS" id="CCDS16047.1"/>
<dbReference type="RefSeq" id="NP_084248.2">
    <property type="nucleotide sequence ID" value="NM_029972.4"/>
</dbReference>
<dbReference type="SMR" id="Q5EBJ4"/>
<dbReference type="BioGRID" id="218905">
    <property type="interactions" value="5"/>
</dbReference>
<dbReference type="FunCoup" id="Q5EBJ4">
    <property type="interactions" value="87"/>
</dbReference>
<dbReference type="IntAct" id="Q5EBJ4">
    <property type="interactions" value="1"/>
</dbReference>
<dbReference type="STRING" id="10090.ENSMUSP00000088458"/>
<dbReference type="GlyGen" id="Q5EBJ4">
    <property type="glycosylation" value="2 sites, 1 N-linked glycan (1 site), 1 O-linked glycan (1 site)"/>
</dbReference>
<dbReference type="iPTMnet" id="Q5EBJ4"/>
<dbReference type="PhosphoSitePlus" id="Q5EBJ4"/>
<dbReference type="SwissPalm" id="Q5EBJ4"/>
<dbReference type="jPOST" id="Q5EBJ4"/>
<dbReference type="PaxDb" id="10090-ENSMUSP00000088458"/>
<dbReference type="PeptideAtlas" id="Q5EBJ4"/>
<dbReference type="ProteomicsDB" id="275474"/>
<dbReference type="Antibodypedia" id="33703">
    <property type="antibodies" value="109 antibodies from 21 providers"/>
</dbReference>
<dbReference type="DNASU" id="77767"/>
<dbReference type="Ensembl" id="ENSMUST00000090940.6">
    <property type="protein sequence ID" value="ENSMUSP00000088458.6"/>
    <property type="gene ID" value="ENSMUSG00000026830.10"/>
</dbReference>
<dbReference type="GeneID" id="77767"/>
<dbReference type="KEGG" id="mmu:77767"/>
<dbReference type="UCSC" id="uc008jsh.1">
    <property type="organism name" value="mouse"/>
</dbReference>
<dbReference type="AGR" id="MGI:1925017"/>
<dbReference type="CTD" id="57471"/>
<dbReference type="MGI" id="MGI:1925017">
    <property type="gene designation" value="Ermn"/>
</dbReference>
<dbReference type="VEuPathDB" id="HostDB:ENSMUSG00000026830"/>
<dbReference type="eggNOG" id="KOG2030">
    <property type="taxonomic scope" value="Eukaryota"/>
</dbReference>
<dbReference type="GeneTree" id="ENSGT01090000260082"/>
<dbReference type="HOGENOM" id="CLU_090355_0_0_1"/>
<dbReference type="InParanoid" id="Q5EBJ4"/>
<dbReference type="OMA" id="TPPYYRV"/>
<dbReference type="OrthoDB" id="9947518at2759"/>
<dbReference type="PhylomeDB" id="Q5EBJ4"/>
<dbReference type="TreeFam" id="TF337225"/>
<dbReference type="BioGRID-ORCS" id="77767">
    <property type="hits" value="3 hits in 77 CRISPR screens"/>
</dbReference>
<dbReference type="ChiTaRS" id="Ermn">
    <property type="organism name" value="mouse"/>
</dbReference>
<dbReference type="PRO" id="PR:Q5EBJ4"/>
<dbReference type="Proteomes" id="UP000000589">
    <property type="component" value="Chromosome 2"/>
</dbReference>
<dbReference type="RNAct" id="Q5EBJ4">
    <property type="molecule type" value="protein"/>
</dbReference>
<dbReference type="Bgee" id="ENSMUSG00000026830">
    <property type="expression patterns" value="Expressed in cerebellar nuclear complex and 68 other cell types or tissues"/>
</dbReference>
<dbReference type="GO" id="GO:0005938">
    <property type="term" value="C:cell cortex"/>
    <property type="evidence" value="ECO:0007669"/>
    <property type="project" value="Ensembl"/>
</dbReference>
<dbReference type="GO" id="GO:0005856">
    <property type="term" value="C:cytoskeleton"/>
    <property type="evidence" value="ECO:0007669"/>
    <property type="project" value="UniProtKB-SubCell"/>
</dbReference>
<dbReference type="GO" id="GO:0030175">
    <property type="term" value="C:filopodium"/>
    <property type="evidence" value="ECO:0000314"/>
    <property type="project" value="MGI"/>
</dbReference>
<dbReference type="GO" id="GO:0097386">
    <property type="term" value="C:glial cell projection"/>
    <property type="evidence" value="ECO:0000314"/>
    <property type="project" value="MGI"/>
</dbReference>
<dbReference type="GO" id="GO:0033269">
    <property type="term" value="C:internode region of axon"/>
    <property type="evidence" value="ECO:0000314"/>
    <property type="project" value="MGI"/>
</dbReference>
<dbReference type="GO" id="GO:0043209">
    <property type="term" value="C:myelin sheath"/>
    <property type="evidence" value="ECO:0000314"/>
    <property type="project" value="MGI"/>
</dbReference>
<dbReference type="GO" id="GO:0043025">
    <property type="term" value="C:neuronal cell body"/>
    <property type="evidence" value="ECO:0000314"/>
    <property type="project" value="MGI"/>
</dbReference>
<dbReference type="GO" id="GO:0033270">
    <property type="term" value="C:paranode region of axon"/>
    <property type="evidence" value="ECO:0000314"/>
    <property type="project" value="MGI"/>
</dbReference>
<dbReference type="GO" id="GO:0051015">
    <property type="term" value="F:actin filament binding"/>
    <property type="evidence" value="ECO:0000314"/>
    <property type="project" value="MGI"/>
</dbReference>
<dbReference type="GO" id="GO:0007015">
    <property type="term" value="P:actin filament organization"/>
    <property type="evidence" value="ECO:0000314"/>
    <property type="project" value="MGI"/>
</dbReference>
<dbReference type="GO" id="GO:0001763">
    <property type="term" value="P:morphogenesis of a branching structure"/>
    <property type="evidence" value="ECO:0000314"/>
    <property type="project" value="MGI"/>
</dbReference>
<dbReference type="GO" id="GO:0031344">
    <property type="term" value="P:regulation of cell projection organization"/>
    <property type="evidence" value="ECO:0000314"/>
    <property type="project" value="MGI"/>
</dbReference>
<dbReference type="GO" id="GO:0008360">
    <property type="term" value="P:regulation of cell shape"/>
    <property type="evidence" value="ECO:0000314"/>
    <property type="project" value="MGI"/>
</dbReference>
<dbReference type="Gene3D" id="6.10.360.10">
    <property type="match status" value="1"/>
</dbReference>
<dbReference type="InterPro" id="IPR045346">
    <property type="entry name" value="Ermin"/>
</dbReference>
<dbReference type="InterPro" id="IPR008954">
    <property type="entry name" value="Moesin_tail_sf"/>
</dbReference>
<dbReference type="PANTHER" id="PTHR47137">
    <property type="entry name" value="ERMIN"/>
    <property type="match status" value="1"/>
</dbReference>
<dbReference type="PANTHER" id="PTHR47137:SF1">
    <property type="entry name" value="ERMIN"/>
    <property type="match status" value="1"/>
</dbReference>
<dbReference type="Pfam" id="PF20491">
    <property type="entry name" value="Ermin"/>
    <property type="match status" value="1"/>
</dbReference>
<dbReference type="SUPFAM" id="SSF48678">
    <property type="entry name" value="Moesin tail domain"/>
    <property type="match status" value="1"/>
</dbReference>